<dbReference type="EC" id="1.14.-.-"/>
<dbReference type="EMBL" id="AE013599">
    <property type="protein sequence ID" value="AAF57417.2"/>
    <property type="molecule type" value="Genomic_DNA"/>
</dbReference>
<dbReference type="EMBL" id="AY069834">
    <property type="protein sequence ID" value="AAL39979.1"/>
    <property type="molecule type" value="mRNA"/>
</dbReference>
<dbReference type="RefSeq" id="NP_001286149.1">
    <property type="nucleotide sequence ID" value="NM_001299220.1"/>
</dbReference>
<dbReference type="RefSeq" id="NP_001286150.1">
    <property type="nucleotide sequence ID" value="NM_001299221.1"/>
</dbReference>
<dbReference type="RefSeq" id="NP_610252.3">
    <property type="nucleotide sequence ID" value="NM_136408.4"/>
</dbReference>
<dbReference type="SMR" id="Q9V979"/>
<dbReference type="FunCoup" id="Q9V979">
    <property type="interactions" value="26"/>
</dbReference>
<dbReference type="STRING" id="7227.FBpp0311788"/>
<dbReference type="PaxDb" id="7227-FBpp0085516"/>
<dbReference type="EnsemblMetazoa" id="FBtr0086185">
    <property type="protein sequence ID" value="FBpp0085516"/>
    <property type="gene ID" value="FBgn0033121"/>
</dbReference>
<dbReference type="EnsemblMetazoa" id="FBtr0345011">
    <property type="protein sequence ID" value="FBpp0311262"/>
    <property type="gene ID" value="FBgn0033121"/>
</dbReference>
<dbReference type="EnsemblMetazoa" id="FBtr0345802">
    <property type="protein sequence ID" value="FBpp0311788"/>
    <property type="gene ID" value="FBgn0033121"/>
</dbReference>
<dbReference type="GeneID" id="35608"/>
<dbReference type="KEGG" id="dme:Dmel_CG3567"/>
<dbReference type="UCSC" id="CG3567-RA">
    <property type="organism name" value="d. melanogaster"/>
</dbReference>
<dbReference type="AGR" id="FB:FBgn0033121"/>
<dbReference type="CTD" id="35608"/>
<dbReference type="FlyBase" id="FBgn0033121">
    <property type="gene designation" value="Cyp6u1"/>
</dbReference>
<dbReference type="VEuPathDB" id="VectorBase:FBgn0033121"/>
<dbReference type="eggNOG" id="KOG0158">
    <property type="taxonomic scope" value="Eukaryota"/>
</dbReference>
<dbReference type="GeneTree" id="ENSGT00940000165972"/>
<dbReference type="HOGENOM" id="CLU_001570_5_2_1"/>
<dbReference type="InParanoid" id="Q9V979"/>
<dbReference type="OMA" id="FSLWRAY"/>
<dbReference type="OrthoDB" id="2789670at2759"/>
<dbReference type="PhylomeDB" id="Q9V979"/>
<dbReference type="BioGRID-ORCS" id="35608">
    <property type="hits" value="0 hits in 1 CRISPR screen"/>
</dbReference>
<dbReference type="GenomeRNAi" id="35608"/>
<dbReference type="PRO" id="PR:Q9V979"/>
<dbReference type="Proteomes" id="UP000000803">
    <property type="component" value="Chromosome 2R"/>
</dbReference>
<dbReference type="Bgee" id="FBgn0033121">
    <property type="expression patterns" value="Expressed in adult anterior midgut class II enteroendocrine cell in adult midgut (Drosophila) and 62 other cell types or tissues"/>
</dbReference>
<dbReference type="ExpressionAtlas" id="Q9V979">
    <property type="expression patterns" value="baseline and differential"/>
</dbReference>
<dbReference type="GO" id="GO:0005789">
    <property type="term" value="C:endoplasmic reticulum membrane"/>
    <property type="evidence" value="ECO:0007669"/>
    <property type="project" value="UniProtKB-SubCell"/>
</dbReference>
<dbReference type="GO" id="GO:0020037">
    <property type="term" value="F:heme binding"/>
    <property type="evidence" value="ECO:0007669"/>
    <property type="project" value="InterPro"/>
</dbReference>
<dbReference type="GO" id="GO:0005506">
    <property type="term" value="F:iron ion binding"/>
    <property type="evidence" value="ECO:0007669"/>
    <property type="project" value="InterPro"/>
</dbReference>
<dbReference type="GO" id="GO:0004497">
    <property type="term" value="F:monooxygenase activity"/>
    <property type="evidence" value="ECO:0007669"/>
    <property type="project" value="UniProtKB-KW"/>
</dbReference>
<dbReference type="GO" id="GO:0016705">
    <property type="term" value="F:oxidoreductase activity, acting on paired donors, with incorporation or reduction of molecular oxygen"/>
    <property type="evidence" value="ECO:0007669"/>
    <property type="project" value="InterPro"/>
</dbReference>
<dbReference type="CDD" id="cd11056">
    <property type="entry name" value="CYP6-like"/>
    <property type="match status" value="1"/>
</dbReference>
<dbReference type="Gene3D" id="1.10.630.10">
    <property type="entry name" value="Cytochrome P450"/>
    <property type="match status" value="1"/>
</dbReference>
<dbReference type="InterPro" id="IPR001128">
    <property type="entry name" value="Cyt_P450"/>
</dbReference>
<dbReference type="InterPro" id="IPR017972">
    <property type="entry name" value="Cyt_P450_CS"/>
</dbReference>
<dbReference type="InterPro" id="IPR002401">
    <property type="entry name" value="Cyt_P450_E_grp-I"/>
</dbReference>
<dbReference type="InterPro" id="IPR036396">
    <property type="entry name" value="Cyt_P450_sf"/>
</dbReference>
<dbReference type="InterPro" id="IPR050476">
    <property type="entry name" value="Insect_CytP450_Detox"/>
</dbReference>
<dbReference type="PANTHER" id="PTHR24292">
    <property type="entry name" value="CYTOCHROME P450"/>
    <property type="match status" value="1"/>
</dbReference>
<dbReference type="PANTHER" id="PTHR24292:SF100">
    <property type="entry name" value="CYTOCHROME P450 6A16, ISOFORM B-RELATED"/>
    <property type="match status" value="1"/>
</dbReference>
<dbReference type="Pfam" id="PF00067">
    <property type="entry name" value="p450"/>
    <property type="match status" value="1"/>
</dbReference>
<dbReference type="PRINTS" id="PR00463">
    <property type="entry name" value="EP450I"/>
</dbReference>
<dbReference type="PRINTS" id="PR00385">
    <property type="entry name" value="P450"/>
</dbReference>
<dbReference type="SUPFAM" id="SSF48264">
    <property type="entry name" value="Cytochrome P450"/>
    <property type="match status" value="1"/>
</dbReference>
<dbReference type="PROSITE" id="PS00086">
    <property type="entry name" value="CYTOCHROME_P450"/>
    <property type="match status" value="1"/>
</dbReference>
<proteinExistence type="evidence at transcript level"/>
<keyword id="KW-0256">Endoplasmic reticulum</keyword>
<keyword id="KW-0349">Heme</keyword>
<keyword id="KW-0408">Iron</keyword>
<keyword id="KW-0472">Membrane</keyword>
<keyword id="KW-0479">Metal-binding</keyword>
<keyword id="KW-0492">Microsome</keyword>
<keyword id="KW-0503">Monooxygenase</keyword>
<keyword id="KW-0560">Oxidoreductase</keyword>
<keyword id="KW-1185">Reference proteome</keyword>
<organism>
    <name type="scientific">Drosophila melanogaster</name>
    <name type="common">Fruit fly</name>
    <dbReference type="NCBI Taxonomy" id="7227"/>
    <lineage>
        <taxon>Eukaryota</taxon>
        <taxon>Metazoa</taxon>
        <taxon>Ecdysozoa</taxon>
        <taxon>Arthropoda</taxon>
        <taxon>Hexapoda</taxon>
        <taxon>Insecta</taxon>
        <taxon>Pterygota</taxon>
        <taxon>Neoptera</taxon>
        <taxon>Endopterygota</taxon>
        <taxon>Diptera</taxon>
        <taxon>Brachycera</taxon>
        <taxon>Muscomorpha</taxon>
        <taxon>Ephydroidea</taxon>
        <taxon>Drosophilidae</taxon>
        <taxon>Drosophila</taxon>
        <taxon>Sophophora</taxon>
    </lineage>
</organism>
<comment type="function">
    <text evidence="1">May be involved in the metabolism of insect hormones and in the breakdown of synthetic insecticides.</text>
</comment>
<comment type="cofactor">
    <cofactor evidence="1">
        <name>heme</name>
        <dbReference type="ChEBI" id="CHEBI:30413"/>
    </cofactor>
</comment>
<comment type="subcellular location">
    <subcellularLocation>
        <location evidence="2">Endoplasmic reticulum membrane</location>
        <topology evidence="2">Peripheral membrane protein</topology>
    </subcellularLocation>
    <subcellularLocation>
        <location evidence="2">Microsome membrane</location>
        <topology evidence="2">Peripheral membrane protein</topology>
    </subcellularLocation>
</comment>
<comment type="similarity">
    <text evidence="2">Belongs to the cytochrome P450 family.</text>
</comment>
<accession>Q9V979</accession>
<accession>Q8T9B9</accession>
<gene>
    <name type="primary">Cyp6u1</name>
    <name type="ORF">CG3567</name>
</gene>
<feature type="chain" id="PRO_0000051890" description="Probable cytochrome P450 6u1">
    <location>
        <begin position="1"/>
        <end position="488"/>
    </location>
</feature>
<feature type="binding site" description="axial binding residue" evidence="1">
    <location>
        <position position="430"/>
    </location>
    <ligand>
        <name>heme</name>
        <dbReference type="ChEBI" id="CHEBI:30413"/>
    </ligand>
    <ligandPart>
        <name>Fe</name>
        <dbReference type="ChEBI" id="CHEBI:18248"/>
    </ligandPart>
</feature>
<sequence>MDLMHRTLLTALGALSVVYALVKFSLGYWKRRGILHEKPKFLWGNIKGVVSGKRHAQDALQDIYTAYKGRAPFVGFYACLKPFILALDLKLVHQIIFTDAGHFTSRGLYSNPSGEPLSHNLLQLDGHKWRSLHAKSAEVFTPANMQKLLVRLSQISSRIQRDLGEKSLQTINISELVGAYNTDVMASMAFGLVGQDNVEFAKWTRNYWADFRMWQAYLALEFPLIARLLQYKSYAEPATAYFQKVALSQLQLHRRRDRQPLQTFLQLYSNAEKPLTDIEIAGQAFGFVLAGLGPLNATLAFCLYELARQPEVQDRTRLEINKALEEHGGQVTPECLRELRYTKQVLNETLRLHTPHPFLLRRATKEFEVPGSVFVIAKGNNVLIPTAAIHMDPGIYENPQRFYPERFEEQARRSRPAAAFLPFGDGLRGCIAARFAEQQLLVGLVALLRQHRYAPSAETSIPVEYDNRRLLLMPKSDIKLSVERVDKL</sequence>
<reference key="1">
    <citation type="journal article" date="2000" name="Science">
        <title>The genome sequence of Drosophila melanogaster.</title>
        <authorList>
            <person name="Adams M.D."/>
            <person name="Celniker S.E."/>
            <person name="Holt R.A."/>
            <person name="Evans C.A."/>
            <person name="Gocayne J.D."/>
            <person name="Amanatides P.G."/>
            <person name="Scherer S.E."/>
            <person name="Li P.W."/>
            <person name="Hoskins R.A."/>
            <person name="Galle R.F."/>
            <person name="George R.A."/>
            <person name="Lewis S.E."/>
            <person name="Richards S."/>
            <person name="Ashburner M."/>
            <person name="Henderson S.N."/>
            <person name="Sutton G.G."/>
            <person name="Wortman J.R."/>
            <person name="Yandell M.D."/>
            <person name="Zhang Q."/>
            <person name="Chen L.X."/>
            <person name="Brandon R.C."/>
            <person name="Rogers Y.-H.C."/>
            <person name="Blazej R.G."/>
            <person name="Champe M."/>
            <person name="Pfeiffer B.D."/>
            <person name="Wan K.H."/>
            <person name="Doyle C."/>
            <person name="Baxter E.G."/>
            <person name="Helt G."/>
            <person name="Nelson C.R."/>
            <person name="Miklos G.L.G."/>
            <person name="Abril J.F."/>
            <person name="Agbayani A."/>
            <person name="An H.-J."/>
            <person name="Andrews-Pfannkoch C."/>
            <person name="Baldwin D."/>
            <person name="Ballew R.M."/>
            <person name="Basu A."/>
            <person name="Baxendale J."/>
            <person name="Bayraktaroglu L."/>
            <person name="Beasley E.M."/>
            <person name="Beeson K.Y."/>
            <person name="Benos P.V."/>
            <person name="Berman B.P."/>
            <person name="Bhandari D."/>
            <person name="Bolshakov S."/>
            <person name="Borkova D."/>
            <person name="Botchan M.R."/>
            <person name="Bouck J."/>
            <person name="Brokstein P."/>
            <person name="Brottier P."/>
            <person name="Burtis K.C."/>
            <person name="Busam D.A."/>
            <person name="Butler H."/>
            <person name="Cadieu E."/>
            <person name="Center A."/>
            <person name="Chandra I."/>
            <person name="Cherry J.M."/>
            <person name="Cawley S."/>
            <person name="Dahlke C."/>
            <person name="Davenport L.B."/>
            <person name="Davies P."/>
            <person name="de Pablos B."/>
            <person name="Delcher A."/>
            <person name="Deng Z."/>
            <person name="Mays A.D."/>
            <person name="Dew I."/>
            <person name="Dietz S.M."/>
            <person name="Dodson K."/>
            <person name="Doup L.E."/>
            <person name="Downes M."/>
            <person name="Dugan-Rocha S."/>
            <person name="Dunkov B.C."/>
            <person name="Dunn P."/>
            <person name="Durbin K.J."/>
            <person name="Evangelista C.C."/>
            <person name="Ferraz C."/>
            <person name="Ferriera S."/>
            <person name="Fleischmann W."/>
            <person name="Fosler C."/>
            <person name="Gabrielian A.E."/>
            <person name="Garg N.S."/>
            <person name="Gelbart W.M."/>
            <person name="Glasser K."/>
            <person name="Glodek A."/>
            <person name="Gong F."/>
            <person name="Gorrell J.H."/>
            <person name="Gu Z."/>
            <person name="Guan P."/>
            <person name="Harris M."/>
            <person name="Harris N.L."/>
            <person name="Harvey D.A."/>
            <person name="Heiman T.J."/>
            <person name="Hernandez J.R."/>
            <person name="Houck J."/>
            <person name="Hostin D."/>
            <person name="Houston K.A."/>
            <person name="Howland T.J."/>
            <person name="Wei M.-H."/>
            <person name="Ibegwam C."/>
            <person name="Jalali M."/>
            <person name="Kalush F."/>
            <person name="Karpen G.H."/>
            <person name="Ke Z."/>
            <person name="Kennison J.A."/>
            <person name="Ketchum K.A."/>
            <person name="Kimmel B.E."/>
            <person name="Kodira C.D."/>
            <person name="Kraft C.L."/>
            <person name="Kravitz S."/>
            <person name="Kulp D."/>
            <person name="Lai Z."/>
            <person name="Lasko P."/>
            <person name="Lei Y."/>
            <person name="Levitsky A.A."/>
            <person name="Li J.H."/>
            <person name="Li Z."/>
            <person name="Liang Y."/>
            <person name="Lin X."/>
            <person name="Liu X."/>
            <person name="Mattei B."/>
            <person name="McIntosh T.C."/>
            <person name="McLeod M.P."/>
            <person name="McPherson D."/>
            <person name="Merkulov G."/>
            <person name="Milshina N.V."/>
            <person name="Mobarry C."/>
            <person name="Morris J."/>
            <person name="Moshrefi A."/>
            <person name="Mount S.M."/>
            <person name="Moy M."/>
            <person name="Murphy B."/>
            <person name="Murphy L."/>
            <person name="Muzny D.M."/>
            <person name="Nelson D.L."/>
            <person name="Nelson D.R."/>
            <person name="Nelson K.A."/>
            <person name="Nixon K."/>
            <person name="Nusskern D.R."/>
            <person name="Pacleb J.M."/>
            <person name="Palazzolo M."/>
            <person name="Pittman G.S."/>
            <person name="Pan S."/>
            <person name="Pollard J."/>
            <person name="Puri V."/>
            <person name="Reese M.G."/>
            <person name="Reinert K."/>
            <person name="Remington K."/>
            <person name="Saunders R.D.C."/>
            <person name="Scheeler F."/>
            <person name="Shen H."/>
            <person name="Shue B.C."/>
            <person name="Siden-Kiamos I."/>
            <person name="Simpson M."/>
            <person name="Skupski M.P."/>
            <person name="Smith T.J."/>
            <person name="Spier E."/>
            <person name="Spradling A.C."/>
            <person name="Stapleton M."/>
            <person name="Strong R."/>
            <person name="Sun E."/>
            <person name="Svirskas R."/>
            <person name="Tector C."/>
            <person name="Turner R."/>
            <person name="Venter E."/>
            <person name="Wang A.H."/>
            <person name="Wang X."/>
            <person name="Wang Z.-Y."/>
            <person name="Wassarman D.A."/>
            <person name="Weinstock G.M."/>
            <person name="Weissenbach J."/>
            <person name="Williams S.M."/>
            <person name="Woodage T."/>
            <person name="Worley K.C."/>
            <person name="Wu D."/>
            <person name="Yang S."/>
            <person name="Yao Q.A."/>
            <person name="Ye J."/>
            <person name="Yeh R.-F."/>
            <person name="Zaveri J.S."/>
            <person name="Zhan M."/>
            <person name="Zhang G."/>
            <person name="Zhao Q."/>
            <person name="Zheng L."/>
            <person name="Zheng X.H."/>
            <person name="Zhong F.N."/>
            <person name="Zhong W."/>
            <person name="Zhou X."/>
            <person name="Zhu S.C."/>
            <person name="Zhu X."/>
            <person name="Smith H.O."/>
            <person name="Gibbs R.A."/>
            <person name="Myers E.W."/>
            <person name="Rubin G.M."/>
            <person name="Venter J.C."/>
        </authorList>
    </citation>
    <scope>NUCLEOTIDE SEQUENCE [LARGE SCALE GENOMIC DNA]</scope>
    <source>
        <strain>Berkeley</strain>
    </source>
</reference>
<reference key="2">
    <citation type="journal article" date="2002" name="Genome Biol.">
        <title>Annotation of the Drosophila melanogaster euchromatic genome: a systematic review.</title>
        <authorList>
            <person name="Misra S."/>
            <person name="Crosby M.A."/>
            <person name="Mungall C.J."/>
            <person name="Matthews B.B."/>
            <person name="Campbell K.S."/>
            <person name="Hradecky P."/>
            <person name="Huang Y."/>
            <person name="Kaminker J.S."/>
            <person name="Millburn G.H."/>
            <person name="Prochnik S.E."/>
            <person name="Smith C.D."/>
            <person name="Tupy J.L."/>
            <person name="Whitfield E.J."/>
            <person name="Bayraktaroglu L."/>
            <person name="Berman B.P."/>
            <person name="Bettencourt B.R."/>
            <person name="Celniker S.E."/>
            <person name="de Grey A.D.N.J."/>
            <person name="Drysdale R.A."/>
            <person name="Harris N.L."/>
            <person name="Richter J."/>
            <person name="Russo S."/>
            <person name="Schroeder A.J."/>
            <person name="Shu S.Q."/>
            <person name="Stapleton M."/>
            <person name="Yamada C."/>
            <person name="Ashburner M."/>
            <person name="Gelbart W.M."/>
            <person name="Rubin G.M."/>
            <person name="Lewis S.E."/>
        </authorList>
    </citation>
    <scope>GENOME REANNOTATION</scope>
    <source>
        <strain>Berkeley</strain>
    </source>
</reference>
<reference key="3">
    <citation type="journal article" date="2002" name="Genome Biol.">
        <title>A Drosophila full-length cDNA resource.</title>
        <authorList>
            <person name="Stapleton M."/>
            <person name="Carlson J.W."/>
            <person name="Brokstein P."/>
            <person name="Yu C."/>
            <person name="Champe M."/>
            <person name="George R.A."/>
            <person name="Guarin H."/>
            <person name="Kronmiller B."/>
            <person name="Pacleb J.M."/>
            <person name="Park S."/>
            <person name="Wan K.H."/>
            <person name="Rubin G.M."/>
            <person name="Celniker S.E."/>
        </authorList>
    </citation>
    <scope>NUCLEOTIDE SEQUENCE [LARGE SCALE MRNA]</scope>
    <source>
        <strain>Berkeley</strain>
        <tissue>Embryo</tissue>
    </source>
</reference>
<evidence type="ECO:0000250" key="1"/>
<evidence type="ECO:0000305" key="2"/>
<protein>
    <recommendedName>
        <fullName>Probable cytochrome P450 6u1</fullName>
        <ecNumber>1.14.-.-</ecNumber>
    </recommendedName>
    <alternativeName>
        <fullName>CYPVIU1</fullName>
    </alternativeName>
</protein>
<name>CP6U1_DROME</name>